<sequence>MLAIISPAKTLDFETPAPNFPFANSQPKLTAYSQQLIDICKQFSPAELGSLMSISDKLASLNVARFAEWQLEHNEQNSKAALFAFKGDVYTGLDAETLTQAQVEYVQVHLRMLSGLYGLLKPLDLMQPYRLEMGTKLVNPKGKDLYAFWGDIITQHLQTAMDEQGDNILVNLASDEYYGAVKPQKLQATIIKPVFLDEKNGKFKQISFYAKKARGMMVRFILETQPTSVEQLKAFNYGSYWFDEDASGATELVFKREEQA</sequence>
<protein>
    <recommendedName>
        <fullName evidence="1">UPF0246 protein APP7_0648</fullName>
    </recommendedName>
</protein>
<reference key="1">
    <citation type="submission" date="2008-06" db="EMBL/GenBank/DDBJ databases">
        <title>Genome and proteome analysis of A. pleuropneumoniae serotype 7.</title>
        <authorList>
            <person name="Linke B."/>
            <person name="Buettner F."/>
            <person name="Martinez-Arias R."/>
            <person name="Goesmann A."/>
            <person name="Baltes N."/>
            <person name="Tegetmeyer H."/>
            <person name="Singh M."/>
            <person name="Gerlach G.F."/>
        </authorList>
    </citation>
    <scope>NUCLEOTIDE SEQUENCE [LARGE SCALE GENOMIC DNA]</scope>
    <source>
        <strain>AP76</strain>
    </source>
</reference>
<gene>
    <name type="ordered locus">APP7_0648</name>
</gene>
<accession>B3H131</accession>
<dbReference type="EMBL" id="CP001091">
    <property type="protein sequence ID" value="ACE61300.1"/>
    <property type="molecule type" value="Genomic_DNA"/>
</dbReference>
<dbReference type="RefSeq" id="WP_005617087.1">
    <property type="nucleotide sequence ID" value="NC_010939.1"/>
</dbReference>
<dbReference type="SMR" id="B3H131"/>
<dbReference type="KEGG" id="apa:APP7_0648"/>
<dbReference type="HOGENOM" id="CLU_061989_0_0_6"/>
<dbReference type="Proteomes" id="UP000001226">
    <property type="component" value="Chromosome"/>
</dbReference>
<dbReference type="GO" id="GO:0005829">
    <property type="term" value="C:cytosol"/>
    <property type="evidence" value="ECO:0007669"/>
    <property type="project" value="TreeGrafter"/>
</dbReference>
<dbReference type="GO" id="GO:0033194">
    <property type="term" value="P:response to hydroperoxide"/>
    <property type="evidence" value="ECO:0007669"/>
    <property type="project" value="TreeGrafter"/>
</dbReference>
<dbReference type="HAMAP" id="MF_00652">
    <property type="entry name" value="UPF0246"/>
    <property type="match status" value="1"/>
</dbReference>
<dbReference type="InterPro" id="IPR005583">
    <property type="entry name" value="YaaA"/>
</dbReference>
<dbReference type="NCBIfam" id="NF002541">
    <property type="entry name" value="PRK02101.1-1"/>
    <property type="match status" value="1"/>
</dbReference>
<dbReference type="NCBIfam" id="NF002542">
    <property type="entry name" value="PRK02101.1-3"/>
    <property type="match status" value="1"/>
</dbReference>
<dbReference type="PANTHER" id="PTHR30283:SF4">
    <property type="entry name" value="PEROXIDE STRESS RESISTANCE PROTEIN YAAA"/>
    <property type="match status" value="1"/>
</dbReference>
<dbReference type="PANTHER" id="PTHR30283">
    <property type="entry name" value="PEROXIDE STRESS RESPONSE PROTEIN YAAA"/>
    <property type="match status" value="1"/>
</dbReference>
<dbReference type="Pfam" id="PF03883">
    <property type="entry name" value="H2O2_YaaD"/>
    <property type="match status" value="1"/>
</dbReference>
<comment type="similarity">
    <text evidence="1">Belongs to the UPF0246 family.</text>
</comment>
<evidence type="ECO:0000255" key="1">
    <source>
        <dbReference type="HAMAP-Rule" id="MF_00652"/>
    </source>
</evidence>
<organism>
    <name type="scientific">Actinobacillus pleuropneumoniae serotype 7 (strain AP76)</name>
    <dbReference type="NCBI Taxonomy" id="537457"/>
    <lineage>
        <taxon>Bacteria</taxon>
        <taxon>Pseudomonadati</taxon>
        <taxon>Pseudomonadota</taxon>
        <taxon>Gammaproteobacteria</taxon>
        <taxon>Pasteurellales</taxon>
        <taxon>Pasteurellaceae</taxon>
        <taxon>Actinobacillus</taxon>
    </lineage>
</organism>
<name>Y648_ACTP7</name>
<feature type="chain" id="PRO_1000131096" description="UPF0246 protein APP7_0648">
    <location>
        <begin position="1"/>
        <end position="260"/>
    </location>
</feature>
<proteinExistence type="inferred from homology"/>